<dbReference type="EC" id="3.1.11.5" evidence="2"/>
<dbReference type="EC" id="5.6.2.4" evidence="2"/>
<dbReference type="EMBL" id="AL123456">
    <property type="protein sequence ID" value="CCP43371.1"/>
    <property type="molecule type" value="Genomic_DNA"/>
</dbReference>
<dbReference type="PIR" id="C70612">
    <property type="entry name" value="C70612"/>
</dbReference>
<dbReference type="RefSeq" id="NP_215144.1">
    <property type="nucleotide sequence ID" value="NC_000962.3"/>
</dbReference>
<dbReference type="RefSeq" id="WP_003905355.1">
    <property type="nucleotide sequence ID" value="NZ_NVQJ01000033.1"/>
</dbReference>
<dbReference type="SMR" id="P9WMQ3"/>
<dbReference type="STRING" id="83332.Rv0630c"/>
<dbReference type="PaxDb" id="83332-Rv0630c"/>
<dbReference type="GeneID" id="888004"/>
<dbReference type="KEGG" id="mtu:Rv0630c"/>
<dbReference type="KEGG" id="mtv:RVBD_0630c"/>
<dbReference type="TubercuList" id="Rv0630c"/>
<dbReference type="eggNOG" id="COG1074">
    <property type="taxonomic scope" value="Bacteria"/>
</dbReference>
<dbReference type="InParanoid" id="P9WMQ3"/>
<dbReference type="OrthoDB" id="9810135at2"/>
<dbReference type="PhylomeDB" id="P9WMQ3"/>
<dbReference type="Proteomes" id="UP000001584">
    <property type="component" value="Chromosome"/>
</dbReference>
<dbReference type="GO" id="GO:0005829">
    <property type="term" value="C:cytosol"/>
    <property type="evidence" value="ECO:0007005"/>
    <property type="project" value="MTBBASE"/>
</dbReference>
<dbReference type="GO" id="GO:0009338">
    <property type="term" value="C:exodeoxyribonuclease V complex"/>
    <property type="evidence" value="ECO:0000318"/>
    <property type="project" value="GO_Central"/>
</dbReference>
<dbReference type="GO" id="GO:0009274">
    <property type="term" value="C:peptidoglycan-based cell wall"/>
    <property type="evidence" value="ECO:0007005"/>
    <property type="project" value="MTBBASE"/>
</dbReference>
<dbReference type="GO" id="GO:0005886">
    <property type="term" value="C:plasma membrane"/>
    <property type="evidence" value="ECO:0007005"/>
    <property type="project" value="MTBBASE"/>
</dbReference>
<dbReference type="GO" id="GO:0043138">
    <property type="term" value="F:3'-5' DNA helicase activity"/>
    <property type="evidence" value="ECO:0000318"/>
    <property type="project" value="GO_Central"/>
</dbReference>
<dbReference type="GO" id="GO:0005524">
    <property type="term" value="F:ATP binding"/>
    <property type="evidence" value="ECO:0007669"/>
    <property type="project" value="UniProtKB-UniRule"/>
</dbReference>
<dbReference type="GO" id="GO:0016887">
    <property type="term" value="F:ATP hydrolysis activity"/>
    <property type="evidence" value="ECO:0007669"/>
    <property type="project" value="RHEA"/>
</dbReference>
<dbReference type="GO" id="GO:0003677">
    <property type="term" value="F:DNA binding"/>
    <property type="evidence" value="ECO:0007669"/>
    <property type="project" value="UniProtKB-UniRule"/>
</dbReference>
<dbReference type="GO" id="GO:0008854">
    <property type="term" value="F:exodeoxyribonuclease V activity"/>
    <property type="evidence" value="ECO:0007669"/>
    <property type="project" value="UniProtKB-EC"/>
</dbReference>
<dbReference type="GO" id="GO:0000287">
    <property type="term" value="F:magnesium ion binding"/>
    <property type="evidence" value="ECO:0007669"/>
    <property type="project" value="UniProtKB-UniRule"/>
</dbReference>
<dbReference type="GO" id="GO:0000724">
    <property type="term" value="P:double-strand break repair via homologous recombination"/>
    <property type="evidence" value="ECO:0007669"/>
    <property type="project" value="UniProtKB-UniRule"/>
</dbReference>
<dbReference type="GO" id="GO:0000725">
    <property type="term" value="P:recombinational repair"/>
    <property type="evidence" value="ECO:0000318"/>
    <property type="project" value="GO_Central"/>
</dbReference>
<dbReference type="CDD" id="cd22352">
    <property type="entry name" value="RecB_C-like"/>
    <property type="match status" value="1"/>
</dbReference>
<dbReference type="Gene3D" id="3.90.320.10">
    <property type="match status" value="1"/>
</dbReference>
<dbReference type="Gene3D" id="3.40.50.300">
    <property type="entry name" value="P-loop containing nucleotide triphosphate hydrolases"/>
    <property type="match status" value="2"/>
</dbReference>
<dbReference type="Gene3D" id="1.10.486.10">
    <property type="entry name" value="PCRA, domain 4"/>
    <property type="match status" value="1"/>
</dbReference>
<dbReference type="HAMAP" id="MF_01485">
    <property type="entry name" value="RecB"/>
    <property type="match status" value="1"/>
</dbReference>
<dbReference type="InterPro" id="IPR014017">
    <property type="entry name" value="DNA_helicase_UvrD-like_C"/>
</dbReference>
<dbReference type="InterPro" id="IPR000212">
    <property type="entry name" value="DNA_helicase_UvrD/REP"/>
</dbReference>
<dbReference type="InterPro" id="IPR027417">
    <property type="entry name" value="P-loop_NTPase"/>
</dbReference>
<dbReference type="InterPro" id="IPR011604">
    <property type="entry name" value="PDDEXK-like_dom_sf"/>
</dbReference>
<dbReference type="InterPro" id="IPR038726">
    <property type="entry name" value="PDDEXK_AddAB-type"/>
</dbReference>
<dbReference type="InterPro" id="IPR004586">
    <property type="entry name" value="RecB"/>
</dbReference>
<dbReference type="InterPro" id="IPR011335">
    <property type="entry name" value="Restrct_endonuc-II-like"/>
</dbReference>
<dbReference type="InterPro" id="IPR014016">
    <property type="entry name" value="UvrD-like_ATP-bd"/>
</dbReference>
<dbReference type="NCBIfam" id="TIGR00609">
    <property type="entry name" value="recB"/>
    <property type="match status" value="1"/>
</dbReference>
<dbReference type="PANTHER" id="PTHR11070:SF23">
    <property type="entry name" value="RECBCD ENZYME SUBUNIT RECB"/>
    <property type="match status" value="1"/>
</dbReference>
<dbReference type="PANTHER" id="PTHR11070">
    <property type="entry name" value="UVRD / RECB / PCRA DNA HELICASE FAMILY MEMBER"/>
    <property type="match status" value="1"/>
</dbReference>
<dbReference type="Pfam" id="PF12705">
    <property type="entry name" value="PDDEXK_1"/>
    <property type="match status" value="1"/>
</dbReference>
<dbReference type="Pfam" id="PF00580">
    <property type="entry name" value="UvrD-helicase"/>
    <property type="match status" value="1"/>
</dbReference>
<dbReference type="Pfam" id="PF13361">
    <property type="entry name" value="UvrD_C"/>
    <property type="match status" value="1"/>
</dbReference>
<dbReference type="SUPFAM" id="SSF52540">
    <property type="entry name" value="P-loop containing nucleoside triphosphate hydrolases"/>
    <property type="match status" value="1"/>
</dbReference>
<dbReference type="SUPFAM" id="SSF52980">
    <property type="entry name" value="Restriction endonuclease-like"/>
    <property type="match status" value="1"/>
</dbReference>
<dbReference type="PROSITE" id="PS51198">
    <property type="entry name" value="UVRD_HELICASE_ATP_BIND"/>
    <property type="match status" value="1"/>
</dbReference>
<dbReference type="PROSITE" id="PS51217">
    <property type="entry name" value="UVRD_HELICASE_CTER"/>
    <property type="match status" value="1"/>
</dbReference>
<evidence type="ECO:0000250" key="1">
    <source>
        <dbReference type="UniProtKB" id="A0QS29"/>
    </source>
</evidence>
<evidence type="ECO:0000255" key="2">
    <source>
        <dbReference type="HAMAP-Rule" id="MF_01485"/>
    </source>
</evidence>
<evidence type="ECO:0000269" key="3">
    <source>
    </source>
</evidence>
<sequence length="1094" mass="118722">MDRFELLGPLPREGTTTVLEASAGTGKTFALAGLVTRYLAETAATLDEMLLITFNRAASRELRERVRGQIVEAVGALQGDAPPSGELVEHLLRGSDAERAQKRSRLRDALANFDAATIATTHEFCGSVLKSLGVAGDNAADVELKESLTDLVTEIVDDRYLANFGRQETDPELTYAEALALALAVVDDPCAQLRPPDPEPGSKAAVRLRFAAEVLEELERRKGRLRAQGFNDLLIRLATALEAADSPARDRMRERWRIVLVDEFQDTDPMQWRVLERAFSRHSALILIGDPKQAIYGFRGGDIHTYLKAAGTADARYTLGVNWRSDRALVESLQTVLRDATLGHADIVVRGTDAHHAGHRLASAPRPAPFRLRVVKRHTLGYDGTAHVPIEALRRHIPDDLAADVAALLASGATFAGRPVVAADIAVIVEHHKDARACRNALAEAGIPAIYTGDTDVFASQAAKDWLCLLEAFDAPQRSGLVRAAACTMFFGETAESLAAEGDALTDRVAGTLREWADHARHRGVAAVFQAAQLAGMGRRVLSQRGGERDLTDLAHIAQLLHEAAHRERLGLPGLRDWLRRQAKAGAGPPEHNRRLDSDAAAVQIMTVFVAKGLQFPIVYLPFAFNRNVRSDDILLYHDDGTRCLYIGGKDGGAQRRTVEGLNRVEAAHDNLRLTYVALTRAQSQVVAWWAPTFDEVNGGLSRLLRGRRPGQSQVPDRCTPRVTDEQAWAVFAQWEAAGGPSVEESVIGARSSLEKPVPVPGFEVRHFHRRIDTTWRRTSYSDLVRGSEAVTVTSEPAAGGRADEVEIAVVAAPGSGADLTSPLAALPSGASFGSLVHAVLETADPAAPDLAAELEAQVRRHAPWWTVDVDHAQLAPELARALLPMHDTPLGPAAAALTLRQIGVRDRLRELDFEMPLAGGDLRGRSPDVSLADVGELLASHLPGDDPLSPYADRLGSAGLGDQPLRGYLAGSIDVVLRLPGQRYLVVDYKTNHLGDTAADYGFERLTEAMLHSDYPLQALLYVVVLHRFLRWRQRDYAPARHLGGVLYLFVRGMCGAATPVTAGHPAGVFTWNPPTALVVALSDLLDRGRLQS</sequence>
<gene>
    <name evidence="2" type="primary">recB</name>
    <name type="ordered locus">Rv0630c</name>
    <name type="ORF">MTCY20H10.11c</name>
</gene>
<proteinExistence type="evidence at protein level"/>
<accession>P9WMQ3</accession>
<accession>L0T4F0</accession>
<accession>P96920</accession>
<comment type="function">
    <text evidence="1">A helicase/nuclease that prepares dsDNA breaks (DSB) for recombinational DNA repair. Binds to DSBs and unwinds DNA via a highly rapid and processive ATP-dependent bidirectional helicase activity. In the holoenzyme this subunit contributes ATPase, 3'-5' helicase, exonuclease activity and loads RecA onto ssDNA. Unlike the case in E.coli, suppresses RecA-dependent homologous recombination, is instead required for single-strand annealing pathway repair of DSB.</text>
</comment>
<comment type="catalytic activity">
    <reaction evidence="2">
        <text>Exonucleolytic cleavage (in the presence of ATP) in either 5'- to 3'- or 3'- to 5'-direction to yield 5'-phosphooligonucleotides.</text>
        <dbReference type="EC" id="3.1.11.5"/>
    </reaction>
</comment>
<comment type="catalytic activity">
    <reaction evidence="2">
        <text>Couples ATP hydrolysis with the unwinding of duplex DNA by translocating in the 3'-5' direction.</text>
        <dbReference type="EC" id="5.6.2.4"/>
    </reaction>
</comment>
<comment type="catalytic activity">
    <reaction evidence="2">
        <text>ATP + H2O = ADP + phosphate + H(+)</text>
        <dbReference type="Rhea" id="RHEA:13065"/>
        <dbReference type="ChEBI" id="CHEBI:15377"/>
        <dbReference type="ChEBI" id="CHEBI:15378"/>
        <dbReference type="ChEBI" id="CHEBI:30616"/>
        <dbReference type="ChEBI" id="CHEBI:43474"/>
        <dbReference type="ChEBI" id="CHEBI:456216"/>
        <dbReference type="EC" id="5.6.2.4"/>
    </reaction>
</comment>
<comment type="cofactor">
    <cofactor evidence="2">
        <name>Mg(2+)</name>
        <dbReference type="ChEBI" id="CHEBI:18420"/>
    </cofactor>
    <text evidence="2">Binds 1 Mg(2+) ion per subunit.</text>
</comment>
<comment type="subunit">
    <text evidence="2 3">Heterotrimer of RecB, RecC and RecD. All subunits contribute to DNA-binding. Interacts with RecA (By similarity). Co-immunoprecipitates with DarG in the presence and absence of darT (PubMed:32634279).</text>
</comment>
<comment type="domain">
    <text evidence="2">The N-terminal DNA-binding domain is a ssDNA-dependent ATPase and has ATP-dependent 3'-5' helicase function. This domain interacts with RecC.</text>
</comment>
<comment type="domain">
    <text evidence="2">The C-terminal domain has nuclease activity and interacts with RecD. It interacts with RecA, facilitating its loading onto ssDNA.</text>
</comment>
<comment type="miscellaneous">
    <text evidence="2">In the RecBCD complex, RecB has a slow 3'-5' helicase, an exonuclease activity and loads RecA onto ssDNA, RecD has a fast 5'-3' helicase activity, while RecC stimulates the ATPase and processivity of the RecB helicase and contributes to recognition of the Chi site.</text>
</comment>
<comment type="similarity">
    <text evidence="2">Belongs to the helicase family. UvrD subfamily.</text>
</comment>
<organism>
    <name type="scientific">Mycobacterium tuberculosis (strain ATCC 25618 / H37Rv)</name>
    <dbReference type="NCBI Taxonomy" id="83332"/>
    <lineage>
        <taxon>Bacteria</taxon>
        <taxon>Bacillati</taxon>
        <taxon>Actinomycetota</taxon>
        <taxon>Actinomycetes</taxon>
        <taxon>Mycobacteriales</taxon>
        <taxon>Mycobacteriaceae</taxon>
        <taxon>Mycobacterium</taxon>
        <taxon>Mycobacterium tuberculosis complex</taxon>
    </lineage>
</organism>
<protein>
    <recommendedName>
        <fullName evidence="2">RecBCD enzyme subunit RecB</fullName>
        <ecNumber evidence="2">3.1.11.5</ecNumber>
        <ecNumber evidence="2">5.6.2.4</ecNumber>
    </recommendedName>
    <alternativeName>
        <fullName evidence="2">DNA 3'-5' helicase subunit RecB</fullName>
    </alternativeName>
    <alternativeName>
        <fullName evidence="2">Exonuclease V subunit RecB</fullName>
        <shortName evidence="2">ExoV subunit RecB</shortName>
    </alternativeName>
    <alternativeName>
        <fullName evidence="2">Helicase/nuclease RecBCD subunit RecB</fullName>
    </alternativeName>
</protein>
<keyword id="KW-0067">ATP-binding</keyword>
<keyword id="KW-0227">DNA damage</keyword>
<keyword id="KW-0234">DNA repair</keyword>
<keyword id="KW-0238">DNA-binding</keyword>
<keyword id="KW-0269">Exonuclease</keyword>
<keyword id="KW-0347">Helicase</keyword>
<keyword id="KW-0378">Hydrolase</keyword>
<keyword id="KW-0413">Isomerase</keyword>
<keyword id="KW-0460">Magnesium</keyword>
<keyword id="KW-0479">Metal-binding</keyword>
<keyword id="KW-0540">Nuclease</keyword>
<keyword id="KW-0547">Nucleotide-binding</keyword>
<keyword id="KW-1185">Reference proteome</keyword>
<name>RECB_MYCTU</name>
<reference key="1">
    <citation type="journal article" date="1998" name="Nature">
        <title>Deciphering the biology of Mycobacterium tuberculosis from the complete genome sequence.</title>
        <authorList>
            <person name="Cole S.T."/>
            <person name="Brosch R."/>
            <person name="Parkhill J."/>
            <person name="Garnier T."/>
            <person name="Churcher C.M."/>
            <person name="Harris D.E."/>
            <person name="Gordon S.V."/>
            <person name="Eiglmeier K."/>
            <person name="Gas S."/>
            <person name="Barry C.E. III"/>
            <person name="Tekaia F."/>
            <person name="Badcock K."/>
            <person name="Basham D."/>
            <person name="Brown D."/>
            <person name="Chillingworth T."/>
            <person name="Connor R."/>
            <person name="Davies R.M."/>
            <person name="Devlin K."/>
            <person name="Feltwell T."/>
            <person name="Gentles S."/>
            <person name="Hamlin N."/>
            <person name="Holroyd S."/>
            <person name="Hornsby T."/>
            <person name="Jagels K."/>
            <person name="Krogh A."/>
            <person name="McLean J."/>
            <person name="Moule S."/>
            <person name="Murphy L.D."/>
            <person name="Oliver S."/>
            <person name="Osborne J."/>
            <person name="Quail M.A."/>
            <person name="Rajandream M.A."/>
            <person name="Rogers J."/>
            <person name="Rutter S."/>
            <person name="Seeger K."/>
            <person name="Skelton S."/>
            <person name="Squares S."/>
            <person name="Squares R."/>
            <person name="Sulston J.E."/>
            <person name="Taylor K."/>
            <person name="Whitehead S."/>
            <person name="Barrell B.G."/>
        </authorList>
    </citation>
    <scope>NUCLEOTIDE SEQUENCE [LARGE SCALE GENOMIC DNA]</scope>
    <source>
        <strain>ATCC 25618 / H37Rv</strain>
    </source>
</reference>
<reference key="2">
    <citation type="journal article" date="2011" name="Mol. Cell. Proteomics">
        <title>Proteogenomic analysis of Mycobacterium tuberculosis by high resolution mass spectrometry.</title>
        <authorList>
            <person name="Kelkar D.S."/>
            <person name="Kumar D."/>
            <person name="Kumar P."/>
            <person name="Balakrishnan L."/>
            <person name="Muthusamy B."/>
            <person name="Yadav A.K."/>
            <person name="Shrivastava P."/>
            <person name="Marimuthu A."/>
            <person name="Anand S."/>
            <person name="Sundaram H."/>
            <person name="Kingsbury R."/>
            <person name="Harsha H.C."/>
            <person name="Nair B."/>
            <person name="Prasad T.S."/>
            <person name="Chauhan D.S."/>
            <person name="Katoch K."/>
            <person name="Katoch V.M."/>
            <person name="Kumar P."/>
            <person name="Chaerkady R."/>
            <person name="Ramachandran S."/>
            <person name="Dash D."/>
            <person name="Pandey A."/>
        </authorList>
    </citation>
    <scope>IDENTIFICATION BY MASS SPECTROMETRY [LARGE SCALE ANALYSIS]</scope>
    <source>
        <strain>ATCC 25618 / H37Rv</strain>
    </source>
</reference>
<reference key="3">
    <citation type="journal article" date="2020" name="Mol. Microbiol.">
        <title>Depletion of the DarG antitoxin in Mycobacterium tuberculosis triggers the DNA-damage response and leads to cell death.</title>
        <authorList>
            <person name="Zaveri A."/>
            <person name="Wang R."/>
            <person name="Botella L."/>
            <person name="Sharma R."/>
            <person name="Zhu L."/>
            <person name="Wallach J.B."/>
            <person name="Song N."/>
            <person name="Jansen R.S."/>
            <person name="Rhee K.Y."/>
            <person name="Ehrt S."/>
            <person name="Schnappinger D."/>
        </authorList>
    </citation>
    <scope>SUBUNIT</scope>
    <source>
        <strain>H37Rv</strain>
    </source>
</reference>
<feature type="chain" id="PRO_0000102048" description="RecBCD enzyme subunit RecB">
    <location>
        <begin position="1"/>
        <end position="1094"/>
    </location>
</feature>
<feature type="domain" description="UvrD-like helicase ATP-binding" evidence="2">
    <location>
        <begin position="1"/>
        <end position="326"/>
    </location>
</feature>
<feature type="domain" description="UvrD-like helicase C-terminal" evidence="2">
    <location>
        <begin position="357"/>
        <end position="613"/>
    </location>
</feature>
<feature type="region of interest" description="DNA-binding and helicase activity, interacts with RecC" evidence="2">
    <location>
        <begin position="1"/>
        <end position="713"/>
    </location>
</feature>
<feature type="region of interest" description="Nuclease activity, interacts with RecD and RecA" evidence="2">
    <location>
        <begin position="775"/>
        <end position="1094"/>
    </location>
</feature>
<feature type="active site" description="For nuclease activity" evidence="2">
    <location>
        <position position="989"/>
    </location>
</feature>
<feature type="binding site" evidence="2">
    <location>
        <begin position="21"/>
        <end position="28"/>
    </location>
    <ligand>
        <name>ATP</name>
        <dbReference type="ChEBI" id="CHEBI:30616"/>
    </ligand>
</feature>
<feature type="binding site" evidence="2">
    <location>
        <position position="838"/>
    </location>
    <ligand>
        <name>Mg(2+)</name>
        <dbReference type="ChEBI" id="CHEBI:18420"/>
    </ligand>
</feature>
<feature type="binding site" evidence="2">
    <location>
        <position position="975"/>
    </location>
    <ligand>
        <name>Mg(2+)</name>
        <dbReference type="ChEBI" id="CHEBI:18420"/>
    </ligand>
</feature>
<feature type="binding site" evidence="2">
    <location>
        <position position="989"/>
    </location>
    <ligand>
        <name>Mg(2+)</name>
        <dbReference type="ChEBI" id="CHEBI:18420"/>
    </ligand>
</feature>